<gene>
    <name type="primary">Rap1b</name>
</gene>
<reference key="1">
    <citation type="submission" date="1994-03" db="EMBL/GenBank/DDBJ databases">
        <title>Cloning and sequencing of rat Ras like Rap1B cDNA.</title>
        <authorList>
            <person name="Rishi A.K."/>
            <person name="Gulamhussein A.I."/>
            <person name="Steele M.P."/>
        </authorList>
    </citation>
    <scope>NUCLEOTIDE SEQUENCE [MRNA]</scope>
</reference>
<reference key="2">
    <citation type="submission" date="2004-04" db="EMBL/GenBank/DDBJ databases">
        <title>Sequence of Rap1b from Wistar rat thyroid cells.</title>
        <authorList>
            <person name="Tsygankova O.M."/>
            <person name="Meinkoth J.L."/>
        </authorList>
    </citation>
    <scope>NUCLEOTIDE SEQUENCE [MRNA]</scope>
    <source>
        <strain>Wistar</strain>
        <tissue>Thyroid</tissue>
    </source>
</reference>
<reference key="3">
    <citation type="journal article" date="2004" name="Genome Res.">
        <title>The status, quality, and expansion of the NIH full-length cDNA project: the Mammalian Gene Collection (MGC).</title>
        <authorList>
            <consortium name="The MGC Project Team"/>
        </authorList>
    </citation>
    <scope>NUCLEOTIDE SEQUENCE [LARGE SCALE MRNA]</scope>
    <source>
        <tissue>Heart</tissue>
    </source>
</reference>
<comment type="function">
    <text evidence="2">GTP-binding protein that possesses intrinsic GTPase activity. Contributes to the polarizing activity of KRIT1 and CDH5 in the establishment and maintenance of correct endothelial cell polarity and vascular lumen. Required for the localization of phosphorylated PRKCZ, PARD3 and TIAM1 to the cell junction. Plays a role in the establishment of basal endothelial barrier function (By similarity).</text>
</comment>
<comment type="catalytic activity">
    <reaction evidence="2">
        <text>GTP + H2O = GDP + phosphate + H(+)</text>
        <dbReference type="Rhea" id="RHEA:19669"/>
        <dbReference type="ChEBI" id="CHEBI:15377"/>
        <dbReference type="ChEBI" id="CHEBI:15378"/>
        <dbReference type="ChEBI" id="CHEBI:37565"/>
        <dbReference type="ChEBI" id="CHEBI:43474"/>
        <dbReference type="ChEBI" id="CHEBI:58189"/>
        <dbReference type="EC" id="3.6.5.2"/>
    </reaction>
</comment>
<comment type="activity regulation">
    <text evidence="2">Activated by guanine nucleotide-exchange factor (GEF) EPAC2 in a cAMP-dependent manner.</text>
</comment>
<comment type="subunit">
    <text evidence="2">Heterodimer with RAP1GAP (By similarity). Interacts with EPAC2 (By similarity). Interacts with SGSM1 (By similarity). Interacts with SGSM2 (By similarity). Interacts with SGSM3 (By similarity). Interacts with KRIT1 (By similarity). Interacts with RAP1GDS1 (By similarity).</text>
</comment>
<comment type="subcellular location">
    <subcellularLocation>
        <location evidence="2">Cell membrane</location>
    </subcellularLocation>
    <subcellularLocation>
        <location evidence="2">Cytoplasm</location>
        <location evidence="2">Cytosol</location>
    </subcellularLocation>
    <subcellularLocation>
        <location evidence="2">Cell junction</location>
    </subcellularLocation>
    <text evidence="2">May shuttle between plasma membrane and cytosol (By similarity). Presence of KRIT1 and CDH5 is required for its localization to the cell junction (By similarity).</text>
</comment>
<comment type="similarity">
    <text evidence="3">Belongs to the small GTPase superfamily. Ras family.</text>
</comment>
<organism>
    <name type="scientific">Rattus norvegicus</name>
    <name type="common">Rat</name>
    <dbReference type="NCBI Taxonomy" id="10116"/>
    <lineage>
        <taxon>Eukaryota</taxon>
        <taxon>Metazoa</taxon>
        <taxon>Chordata</taxon>
        <taxon>Craniata</taxon>
        <taxon>Vertebrata</taxon>
        <taxon>Euteleostomi</taxon>
        <taxon>Mammalia</taxon>
        <taxon>Eutheria</taxon>
        <taxon>Euarchontoglires</taxon>
        <taxon>Glires</taxon>
        <taxon>Rodentia</taxon>
        <taxon>Myomorpha</taxon>
        <taxon>Muroidea</taxon>
        <taxon>Muridae</taxon>
        <taxon>Murinae</taxon>
        <taxon>Rattus</taxon>
    </lineage>
</organism>
<accession>Q62636</accession>
<accession>Q6J167</accession>
<feature type="chain" id="PRO_0000030213" description="Ras-related protein Rap-1b">
    <location>
        <begin position="1"/>
        <end position="181"/>
    </location>
</feature>
<feature type="propeptide" id="PRO_0000030214" description="Removed in mature form" evidence="1">
    <location>
        <begin position="182"/>
        <end position="184"/>
    </location>
</feature>
<feature type="region of interest" description="Interaction with KRIT1" evidence="2">
    <location>
        <begin position="25"/>
        <end position="67"/>
    </location>
</feature>
<feature type="short sequence motif" description="Effector region" evidence="3">
    <location>
        <begin position="32"/>
        <end position="40"/>
    </location>
</feature>
<feature type="binding site" evidence="2">
    <location>
        <begin position="10"/>
        <end position="18"/>
    </location>
    <ligand>
        <name>GTP</name>
        <dbReference type="ChEBI" id="CHEBI:37565"/>
    </ligand>
</feature>
<feature type="binding site" evidence="2">
    <location>
        <begin position="57"/>
        <end position="61"/>
    </location>
    <ligand>
        <name>GTP</name>
        <dbReference type="ChEBI" id="CHEBI:37565"/>
    </ligand>
</feature>
<feature type="binding site" evidence="2">
    <location>
        <begin position="116"/>
        <end position="119"/>
    </location>
    <ligand>
        <name>GTP</name>
        <dbReference type="ChEBI" id="CHEBI:37565"/>
    </ligand>
</feature>
<feature type="binding site" evidence="2">
    <location>
        <begin position="147"/>
        <end position="149"/>
    </location>
    <ligand>
        <name>GTP</name>
        <dbReference type="ChEBI" id="CHEBI:37565"/>
    </ligand>
</feature>
<feature type="modified residue" description="ADP-ribosylserine; by botulinum toxin" evidence="1">
    <location>
        <position position="39"/>
    </location>
</feature>
<feature type="modified residue" description="Phosphoserine; by PKA" evidence="2">
    <location>
        <position position="179"/>
    </location>
</feature>
<feature type="modified residue" description="Cysteine methyl ester" evidence="2">
    <location>
        <position position="181"/>
    </location>
</feature>
<feature type="lipid moiety-binding region" description="S-geranylgeranyl cysteine" evidence="2">
    <location>
        <position position="181"/>
    </location>
</feature>
<feature type="sequence conflict" description="In Ref. 1; AAA92787." evidence="3" ref="1">
    <original>T</original>
    <variation>A</variation>
    <location>
        <position position="58"/>
    </location>
</feature>
<feature type="sequence conflict" description="In Ref. 1; AAA92787." evidence="3" ref="1">
    <original>G</original>
    <variation>E</variation>
    <location>
        <position position="75"/>
    </location>
</feature>
<feature type="sequence conflict" description="In Ref. 1; AAA92787." evidence="3" ref="1">
    <original>AQSTF</original>
    <variation>TQIDC</variation>
    <location>
        <begin position="86"/>
        <end position="90"/>
    </location>
</feature>
<feature type="sequence conflict" description="In Ref. 1; AAA92787." evidence="3" ref="1">
    <original>D</original>
    <variation>G</variation>
    <location>
        <position position="95"/>
    </location>
</feature>
<feature type="sequence conflict" description="In Ref. 1; AAA92787." evidence="3" ref="1">
    <original>G</original>
    <variation>P</variation>
    <location>
        <position position="127"/>
    </location>
</feature>
<feature type="sequence conflict" description="In Ref. 1; AAA92787." evidence="3" ref="1">
    <original>KA</original>
    <variation>NR</variation>
    <location>
        <begin position="174"/>
        <end position="175"/>
    </location>
</feature>
<feature type="sequence conflict" description="In Ref. 1; AAA92787." evidence="3" ref="1">
    <original>S</original>
    <variation>P</variation>
    <location>
        <position position="180"/>
    </location>
</feature>
<feature type="strand" evidence="4">
    <location>
        <begin position="3"/>
        <end position="9"/>
    </location>
</feature>
<feature type="helix" evidence="4">
    <location>
        <begin position="16"/>
        <end position="25"/>
    </location>
</feature>
<feature type="strand" evidence="4">
    <location>
        <begin position="39"/>
        <end position="46"/>
    </location>
</feature>
<feature type="strand" evidence="4">
    <location>
        <begin position="49"/>
        <end position="57"/>
    </location>
</feature>
<feature type="helix" evidence="4">
    <location>
        <begin position="61"/>
        <end position="63"/>
    </location>
</feature>
<feature type="helix" evidence="4">
    <location>
        <begin position="68"/>
        <end position="74"/>
    </location>
</feature>
<feature type="strand" evidence="4">
    <location>
        <begin position="76"/>
        <end position="83"/>
    </location>
</feature>
<feature type="helix" evidence="4">
    <location>
        <begin position="87"/>
        <end position="104"/>
    </location>
</feature>
<feature type="strand" evidence="4">
    <location>
        <begin position="111"/>
        <end position="116"/>
    </location>
</feature>
<feature type="helix" evidence="4">
    <location>
        <begin position="121"/>
        <end position="123"/>
    </location>
</feature>
<feature type="helix" evidence="4">
    <location>
        <begin position="128"/>
        <end position="137"/>
    </location>
</feature>
<feature type="strand" evidence="4">
    <location>
        <begin position="143"/>
        <end position="145"/>
    </location>
</feature>
<feature type="turn" evidence="4">
    <location>
        <begin position="148"/>
        <end position="151"/>
    </location>
</feature>
<feature type="helix" evidence="4">
    <location>
        <begin position="154"/>
        <end position="165"/>
    </location>
</feature>
<dbReference type="EC" id="3.6.5.2" evidence="2"/>
<dbReference type="EMBL" id="U07795">
    <property type="protein sequence ID" value="AAA92787.1"/>
    <property type="molecule type" value="mRNA"/>
</dbReference>
<dbReference type="EMBL" id="AY607847">
    <property type="protein sequence ID" value="AAT37620.1"/>
    <property type="molecule type" value="mRNA"/>
</dbReference>
<dbReference type="EMBL" id="BC081731">
    <property type="protein sequence ID" value="AAH81731.1"/>
    <property type="molecule type" value="mRNA"/>
</dbReference>
<dbReference type="RefSeq" id="NP_001399529.1">
    <property type="nucleotide sequence ID" value="NM_001412600.1"/>
</dbReference>
<dbReference type="RefSeq" id="NP_599173.2">
    <property type="nucleotide sequence ID" value="NM_134346.3"/>
</dbReference>
<dbReference type="RefSeq" id="XP_008763599.1">
    <property type="nucleotide sequence ID" value="XM_008765377.2"/>
</dbReference>
<dbReference type="RefSeq" id="XP_038934285.1">
    <property type="nucleotide sequence ID" value="XM_039078357.2"/>
</dbReference>
<dbReference type="PDB" id="3X1W">
    <property type="method" value="X-ray"/>
    <property type="resolution" value="1.20 A"/>
    <property type="chains" value="A=1-167"/>
</dbReference>
<dbReference type="PDB" id="3X1X">
    <property type="method" value="X-ray"/>
    <property type="resolution" value="1.00 A"/>
    <property type="chains" value="A=1-167"/>
</dbReference>
<dbReference type="PDB" id="3X1Y">
    <property type="method" value="X-ray"/>
    <property type="resolution" value="1.17 A"/>
    <property type="chains" value="A=1-167"/>
</dbReference>
<dbReference type="PDB" id="3X1Z">
    <property type="method" value="X-ray"/>
    <property type="resolution" value="1.25 A"/>
    <property type="chains" value="A/B=1-167"/>
</dbReference>
<dbReference type="PDBsum" id="3X1W"/>
<dbReference type="PDBsum" id="3X1X"/>
<dbReference type="PDBsum" id="3X1Y"/>
<dbReference type="PDBsum" id="3X1Z"/>
<dbReference type="SMR" id="Q62636"/>
<dbReference type="BioGRID" id="251189">
    <property type="interactions" value="1"/>
</dbReference>
<dbReference type="FunCoup" id="Q62636">
    <property type="interactions" value="4139"/>
</dbReference>
<dbReference type="IntAct" id="Q62636">
    <property type="interactions" value="1"/>
</dbReference>
<dbReference type="STRING" id="10116.ENSRNOP00000009511"/>
<dbReference type="iPTMnet" id="Q62636"/>
<dbReference type="PhosphoSitePlus" id="Q62636"/>
<dbReference type="jPOST" id="Q62636"/>
<dbReference type="PaxDb" id="10116-ENSRNOP00000009511"/>
<dbReference type="Ensembl" id="ENSRNOT00000113270.1">
    <property type="protein sequence ID" value="ENSRNOP00000078778.1"/>
    <property type="gene ID" value="ENSRNOG00000007048.6"/>
</dbReference>
<dbReference type="GeneID" id="171337"/>
<dbReference type="KEGG" id="rno:171337"/>
<dbReference type="UCSC" id="RGD:620577">
    <property type="organism name" value="rat"/>
</dbReference>
<dbReference type="AGR" id="RGD:620577"/>
<dbReference type="CTD" id="5908"/>
<dbReference type="RGD" id="620577">
    <property type="gene designation" value="Rap1b"/>
</dbReference>
<dbReference type="eggNOG" id="KOG0395">
    <property type="taxonomic scope" value="Eukaryota"/>
</dbReference>
<dbReference type="GeneTree" id="ENSGT00940000154429"/>
<dbReference type="HOGENOM" id="CLU_041217_9_8_1"/>
<dbReference type="InParanoid" id="Q62636"/>
<dbReference type="OMA" id="MPLREFK"/>
<dbReference type="OrthoDB" id="5976022at2759"/>
<dbReference type="PhylomeDB" id="Q62636"/>
<dbReference type="TreeFam" id="TF313014"/>
<dbReference type="Reactome" id="R-RNO-354192">
    <property type="pathway name" value="Integrin signaling"/>
</dbReference>
<dbReference type="Reactome" id="R-RNO-354194">
    <property type="pathway name" value="GRB2:SOS provides linkage to MAPK signaling for Integrins"/>
</dbReference>
<dbReference type="Reactome" id="R-RNO-372708">
    <property type="pathway name" value="p130Cas linkage to MAPK signaling for integrins"/>
</dbReference>
<dbReference type="Reactome" id="R-RNO-392517">
    <property type="pathway name" value="Rap1 signalling"/>
</dbReference>
<dbReference type="Reactome" id="R-RNO-5674135">
    <property type="pathway name" value="MAP2K and MAPK activation"/>
</dbReference>
<dbReference type="Reactome" id="R-RNO-6798695">
    <property type="pathway name" value="Neutrophil degranulation"/>
</dbReference>
<dbReference type="Reactome" id="R-RNO-8875555">
    <property type="pathway name" value="MET activates RAP1 and RAC1"/>
</dbReference>
<dbReference type="EvolutionaryTrace" id="Q62636"/>
<dbReference type="PRO" id="PR:Q62636"/>
<dbReference type="Proteomes" id="UP000002494">
    <property type="component" value="Chromosome 7"/>
</dbReference>
<dbReference type="Bgee" id="ENSRNOG00000007048">
    <property type="expression patterns" value="Expressed in spleen and 19 other cell types or tissues"/>
</dbReference>
<dbReference type="GO" id="GO:0005911">
    <property type="term" value="C:cell-cell junction"/>
    <property type="evidence" value="ECO:0000250"/>
    <property type="project" value="UniProtKB"/>
</dbReference>
<dbReference type="GO" id="GO:0005829">
    <property type="term" value="C:cytosol"/>
    <property type="evidence" value="ECO:0000266"/>
    <property type="project" value="RGD"/>
</dbReference>
<dbReference type="GO" id="GO:0098978">
    <property type="term" value="C:glutamatergic synapse"/>
    <property type="evidence" value="ECO:0000266"/>
    <property type="project" value="RGD"/>
</dbReference>
<dbReference type="GO" id="GO:0005811">
    <property type="term" value="C:lipid droplet"/>
    <property type="evidence" value="ECO:0000266"/>
    <property type="project" value="RGD"/>
</dbReference>
<dbReference type="GO" id="GO:0005886">
    <property type="term" value="C:plasma membrane"/>
    <property type="evidence" value="ECO:0000318"/>
    <property type="project" value="GO_Central"/>
</dbReference>
<dbReference type="GO" id="GO:0003925">
    <property type="term" value="F:G protein activity"/>
    <property type="evidence" value="ECO:0000266"/>
    <property type="project" value="RGD"/>
</dbReference>
<dbReference type="GO" id="GO:0019003">
    <property type="term" value="F:GDP binding"/>
    <property type="evidence" value="ECO:0000250"/>
    <property type="project" value="UniProtKB"/>
</dbReference>
<dbReference type="GO" id="GO:0005525">
    <property type="term" value="F:GTP binding"/>
    <property type="evidence" value="ECO:0000250"/>
    <property type="project" value="UniProtKB"/>
</dbReference>
<dbReference type="GO" id="GO:0003924">
    <property type="term" value="F:GTPase activity"/>
    <property type="evidence" value="ECO:0000250"/>
    <property type="project" value="UniProtKB"/>
</dbReference>
<dbReference type="GO" id="GO:0044877">
    <property type="term" value="F:protein-containing complex binding"/>
    <property type="evidence" value="ECO:0000266"/>
    <property type="project" value="RGD"/>
</dbReference>
<dbReference type="GO" id="GO:0017156">
    <property type="term" value="P:calcium-ion regulated exocytosis"/>
    <property type="evidence" value="ECO:0000266"/>
    <property type="project" value="RGD"/>
</dbReference>
<dbReference type="GO" id="GO:0008283">
    <property type="term" value="P:cell population proliferation"/>
    <property type="evidence" value="ECO:0000266"/>
    <property type="project" value="RGD"/>
</dbReference>
<dbReference type="GO" id="GO:0071320">
    <property type="term" value="P:cellular response to cAMP"/>
    <property type="evidence" value="ECO:0000250"/>
    <property type="project" value="UniProtKB"/>
</dbReference>
<dbReference type="GO" id="GO:1904322">
    <property type="term" value="P:cellular response to forskolin"/>
    <property type="evidence" value="ECO:0000314"/>
    <property type="project" value="RGD"/>
</dbReference>
<dbReference type="GO" id="GO:0097211">
    <property type="term" value="P:cellular response to gonadotropin-releasing hormone"/>
    <property type="evidence" value="ECO:0000270"/>
    <property type="project" value="RGD"/>
</dbReference>
<dbReference type="GO" id="GO:0061028">
    <property type="term" value="P:establishment of endothelial barrier"/>
    <property type="evidence" value="ECO:0000250"/>
    <property type="project" value="UniProtKB"/>
</dbReference>
<dbReference type="GO" id="GO:0051649">
    <property type="term" value="P:establishment of localization in cell"/>
    <property type="evidence" value="ECO:0000266"/>
    <property type="project" value="RGD"/>
</dbReference>
<dbReference type="GO" id="GO:0099010">
    <property type="term" value="P:modification of postsynaptic structure"/>
    <property type="evidence" value="ECO:0000266"/>
    <property type="project" value="RGD"/>
</dbReference>
<dbReference type="GO" id="GO:0045955">
    <property type="term" value="P:negative regulation of calcium ion-dependent exocytosis"/>
    <property type="evidence" value="ECO:0000266"/>
    <property type="project" value="RGD"/>
</dbReference>
<dbReference type="GO" id="GO:2000301">
    <property type="term" value="P:negative regulation of synaptic vesicle exocytosis"/>
    <property type="evidence" value="ECO:0000266"/>
    <property type="project" value="RGD"/>
</dbReference>
<dbReference type="GO" id="GO:0070374">
    <property type="term" value="P:positive regulation of ERK1 and ERK2 cascade"/>
    <property type="evidence" value="ECO:0000266"/>
    <property type="project" value="RGD"/>
</dbReference>
<dbReference type="GO" id="GO:0033625">
    <property type="term" value="P:positive regulation of integrin activation"/>
    <property type="evidence" value="ECO:0000266"/>
    <property type="project" value="RGD"/>
</dbReference>
<dbReference type="GO" id="GO:0032486">
    <property type="term" value="P:Rap protein signal transduction"/>
    <property type="evidence" value="ECO:0000250"/>
    <property type="project" value="UniProtKB"/>
</dbReference>
<dbReference type="GO" id="GO:1901888">
    <property type="term" value="P:regulation of cell junction assembly"/>
    <property type="evidence" value="ECO:0000250"/>
    <property type="project" value="UniProtKB"/>
</dbReference>
<dbReference type="GO" id="GO:2000114">
    <property type="term" value="P:regulation of establishment of cell polarity"/>
    <property type="evidence" value="ECO:0000250"/>
    <property type="project" value="UniProtKB"/>
</dbReference>
<dbReference type="GO" id="GO:0009743">
    <property type="term" value="P:response to carbohydrate"/>
    <property type="evidence" value="ECO:0000270"/>
    <property type="project" value="RGD"/>
</dbReference>
<dbReference type="GO" id="GO:0007264">
    <property type="term" value="P:small GTPase-mediated signal transduction"/>
    <property type="evidence" value="ECO:0000266"/>
    <property type="project" value="RGD"/>
</dbReference>
<dbReference type="CDD" id="cd04175">
    <property type="entry name" value="Rap1"/>
    <property type="match status" value="1"/>
</dbReference>
<dbReference type="FunFam" id="3.40.50.300:FF:000182">
    <property type="entry name" value="ras-related protein Rap-1b"/>
    <property type="match status" value="1"/>
</dbReference>
<dbReference type="Gene3D" id="3.40.50.300">
    <property type="entry name" value="P-loop containing nucleotide triphosphate hydrolases"/>
    <property type="match status" value="1"/>
</dbReference>
<dbReference type="InterPro" id="IPR027417">
    <property type="entry name" value="P-loop_NTPase"/>
</dbReference>
<dbReference type="InterPro" id="IPR038851">
    <property type="entry name" value="Rap1"/>
</dbReference>
<dbReference type="InterPro" id="IPR005225">
    <property type="entry name" value="Small_GTP-bd"/>
</dbReference>
<dbReference type="InterPro" id="IPR001806">
    <property type="entry name" value="Small_GTPase"/>
</dbReference>
<dbReference type="InterPro" id="IPR020849">
    <property type="entry name" value="Small_GTPase_Ras-type"/>
</dbReference>
<dbReference type="NCBIfam" id="TIGR00231">
    <property type="entry name" value="small_GTP"/>
    <property type="match status" value="1"/>
</dbReference>
<dbReference type="PANTHER" id="PTHR24070">
    <property type="entry name" value="RAS, DI-RAS, AND RHEB FAMILY MEMBERS OF SMALL GTPASE SUPERFAMILY"/>
    <property type="match status" value="1"/>
</dbReference>
<dbReference type="Pfam" id="PF00071">
    <property type="entry name" value="Ras"/>
    <property type="match status" value="1"/>
</dbReference>
<dbReference type="PRINTS" id="PR00449">
    <property type="entry name" value="RASTRNSFRMNG"/>
</dbReference>
<dbReference type="SMART" id="SM00175">
    <property type="entry name" value="RAB"/>
    <property type="match status" value="1"/>
</dbReference>
<dbReference type="SMART" id="SM00176">
    <property type="entry name" value="RAN"/>
    <property type="match status" value="1"/>
</dbReference>
<dbReference type="SMART" id="SM00173">
    <property type="entry name" value="RAS"/>
    <property type="match status" value="1"/>
</dbReference>
<dbReference type="SMART" id="SM00174">
    <property type="entry name" value="RHO"/>
    <property type="match status" value="1"/>
</dbReference>
<dbReference type="SUPFAM" id="SSF52540">
    <property type="entry name" value="P-loop containing nucleoside triphosphate hydrolases"/>
    <property type="match status" value="1"/>
</dbReference>
<dbReference type="PROSITE" id="PS51421">
    <property type="entry name" value="RAS"/>
    <property type="match status" value="1"/>
</dbReference>
<proteinExistence type="evidence at protein level"/>
<name>RAP1B_RAT</name>
<sequence>MREYKLVVLGSGGVGKSALTVQFVQGIFVEKYDPTIEDSYRKQVEVDAQQCMLEILDTAGTEQFTAMRDLYMKNGQGFALVYSITAQSTFNDLQDLREQILRVKDTDDVPMILVGNKCDLEDERVVGKEQGQNLARQWSNCAFLESSAKSKINVNEIFYDLVRQINRKTPVPGKARKKSSCQLL</sequence>
<evidence type="ECO:0000250" key="1"/>
<evidence type="ECO:0000250" key="2">
    <source>
        <dbReference type="UniProtKB" id="P61224"/>
    </source>
</evidence>
<evidence type="ECO:0000305" key="3"/>
<evidence type="ECO:0007829" key="4">
    <source>
        <dbReference type="PDB" id="3X1X"/>
    </source>
</evidence>
<keyword id="KW-0002">3D-structure</keyword>
<keyword id="KW-0013">ADP-ribosylation</keyword>
<keyword id="KW-0965">Cell junction</keyword>
<keyword id="KW-1003">Cell membrane</keyword>
<keyword id="KW-0963">Cytoplasm</keyword>
<keyword id="KW-0342">GTP-binding</keyword>
<keyword id="KW-0378">Hydrolase</keyword>
<keyword id="KW-0449">Lipoprotein</keyword>
<keyword id="KW-0472">Membrane</keyword>
<keyword id="KW-0488">Methylation</keyword>
<keyword id="KW-0547">Nucleotide-binding</keyword>
<keyword id="KW-0597">Phosphoprotein</keyword>
<keyword id="KW-0636">Prenylation</keyword>
<keyword id="KW-1185">Reference proteome</keyword>
<protein>
    <recommendedName>
        <fullName>Ras-related protein Rap-1b</fullName>
        <ecNumber evidence="2">3.6.5.2</ecNumber>
    </recommendedName>
    <alternativeName>
        <fullName>GTP-binding protein smg p21B</fullName>
    </alternativeName>
</protein>